<accession>A7X3C7</accession>
<proteinExistence type="inferred from homology"/>
<comment type="function">
    <text evidence="1">Component of the acetyl coenzyme A carboxylase (ACC) complex. First, biotin carboxylase catalyzes the carboxylation of biotin on its carrier protein (BCCP) and then the CO(2) group is transferred by the carboxyltransferase to acetyl-CoA to form malonyl-CoA.</text>
</comment>
<comment type="catalytic activity">
    <reaction evidence="1">
        <text>N(6)-carboxybiotinyl-L-lysyl-[protein] + acetyl-CoA = N(6)-biotinyl-L-lysyl-[protein] + malonyl-CoA</text>
        <dbReference type="Rhea" id="RHEA:54728"/>
        <dbReference type="Rhea" id="RHEA-COMP:10505"/>
        <dbReference type="Rhea" id="RHEA-COMP:10506"/>
        <dbReference type="ChEBI" id="CHEBI:57288"/>
        <dbReference type="ChEBI" id="CHEBI:57384"/>
        <dbReference type="ChEBI" id="CHEBI:83144"/>
        <dbReference type="ChEBI" id="CHEBI:83145"/>
        <dbReference type="EC" id="2.1.3.15"/>
    </reaction>
</comment>
<comment type="pathway">
    <text evidence="1">Lipid metabolism; malonyl-CoA biosynthesis; malonyl-CoA from acetyl-CoA: step 1/1.</text>
</comment>
<comment type="subunit">
    <text evidence="1">Acetyl-CoA carboxylase is a heterohexamer composed of biotin carboxyl carrier protein (AccB), biotin carboxylase (AccC) and two subunits each of ACCase subunit alpha (AccA) and ACCase subunit beta (AccD).</text>
</comment>
<comment type="subcellular location">
    <subcellularLocation>
        <location evidence="1">Cytoplasm</location>
    </subcellularLocation>
</comment>
<comment type="similarity">
    <text evidence="1">Belongs to the AccA family.</text>
</comment>
<sequence length="314" mass="35056">MLDFEKPLFEIRNKIESLKESQDKNDVDLQEEIDMLEASLERETKKIYTNLKPWDRVQIARLQERPTTLDYIPYIFDSFMELHGDRNFRDDPAMIGGIGFLNGRAVTVIGQQRGKDTKDNIYRNFGMAHPEGYRKALRLMKQAEKFNRPIFTFIDTKGAYPGKAAEERGQSESIATNLIEMASLKVPVIAIVIGEGGSGGALGIGIANKVLMLENSTYSVISPEGAAALLWKDSNLAKIAAETMKITAHDIKQLGIIDDVISEPLGGAHKDVEQQALAIKSAFVAQLDSLESLSRDEIANDRFEKFRNIGSYIE</sequence>
<dbReference type="EC" id="2.1.3.15" evidence="1"/>
<dbReference type="EMBL" id="AP009324">
    <property type="protein sequence ID" value="BAF78569.1"/>
    <property type="molecule type" value="Genomic_DNA"/>
</dbReference>
<dbReference type="RefSeq" id="WP_000883648.1">
    <property type="nucleotide sequence ID" value="NC_009782.1"/>
</dbReference>
<dbReference type="SMR" id="A7X3C7"/>
<dbReference type="KEGG" id="saw:SAHV_1686"/>
<dbReference type="HOGENOM" id="CLU_015486_0_2_9"/>
<dbReference type="UniPathway" id="UPA00655">
    <property type="reaction ID" value="UER00711"/>
</dbReference>
<dbReference type="GO" id="GO:0009317">
    <property type="term" value="C:acetyl-CoA carboxylase complex"/>
    <property type="evidence" value="ECO:0007669"/>
    <property type="project" value="InterPro"/>
</dbReference>
<dbReference type="GO" id="GO:0003989">
    <property type="term" value="F:acetyl-CoA carboxylase activity"/>
    <property type="evidence" value="ECO:0007669"/>
    <property type="project" value="InterPro"/>
</dbReference>
<dbReference type="GO" id="GO:0005524">
    <property type="term" value="F:ATP binding"/>
    <property type="evidence" value="ECO:0007669"/>
    <property type="project" value="UniProtKB-KW"/>
</dbReference>
<dbReference type="GO" id="GO:0016743">
    <property type="term" value="F:carboxyl- or carbamoyltransferase activity"/>
    <property type="evidence" value="ECO:0007669"/>
    <property type="project" value="UniProtKB-UniRule"/>
</dbReference>
<dbReference type="GO" id="GO:0006633">
    <property type="term" value="P:fatty acid biosynthetic process"/>
    <property type="evidence" value="ECO:0007669"/>
    <property type="project" value="UniProtKB-KW"/>
</dbReference>
<dbReference type="GO" id="GO:2001295">
    <property type="term" value="P:malonyl-CoA biosynthetic process"/>
    <property type="evidence" value="ECO:0007669"/>
    <property type="project" value="UniProtKB-UniRule"/>
</dbReference>
<dbReference type="Gene3D" id="3.90.226.10">
    <property type="entry name" value="2-enoyl-CoA Hydratase, Chain A, domain 1"/>
    <property type="match status" value="1"/>
</dbReference>
<dbReference type="HAMAP" id="MF_00823">
    <property type="entry name" value="AcetylCoA_CT_alpha"/>
    <property type="match status" value="1"/>
</dbReference>
<dbReference type="InterPro" id="IPR001095">
    <property type="entry name" value="Acetyl_CoA_COase_a_su"/>
</dbReference>
<dbReference type="InterPro" id="IPR029045">
    <property type="entry name" value="ClpP/crotonase-like_dom_sf"/>
</dbReference>
<dbReference type="InterPro" id="IPR011763">
    <property type="entry name" value="COA_CT_C"/>
</dbReference>
<dbReference type="NCBIfam" id="TIGR00513">
    <property type="entry name" value="accA"/>
    <property type="match status" value="1"/>
</dbReference>
<dbReference type="NCBIfam" id="NF041504">
    <property type="entry name" value="AccA_sub"/>
    <property type="match status" value="1"/>
</dbReference>
<dbReference type="NCBIfam" id="NF004344">
    <property type="entry name" value="PRK05724.1"/>
    <property type="match status" value="1"/>
</dbReference>
<dbReference type="PANTHER" id="PTHR42853">
    <property type="entry name" value="ACETYL-COENZYME A CARBOXYLASE CARBOXYL TRANSFERASE SUBUNIT ALPHA"/>
    <property type="match status" value="1"/>
</dbReference>
<dbReference type="PANTHER" id="PTHR42853:SF3">
    <property type="entry name" value="ACETYL-COENZYME A CARBOXYLASE CARBOXYL TRANSFERASE SUBUNIT ALPHA, CHLOROPLASTIC"/>
    <property type="match status" value="1"/>
</dbReference>
<dbReference type="Pfam" id="PF03255">
    <property type="entry name" value="ACCA"/>
    <property type="match status" value="1"/>
</dbReference>
<dbReference type="PRINTS" id="PR01069">
    <property type="entry name" value="ACCCTRFRASEA"/>
</dbReference>
<dbReference type="SUPFAM" id="SSF52096">
    <property type="entry name" value="ClpP/crotonase"/>
    <property type="match status" value="1"/>
</dbReference>
<dbReference type="PROSITE" id="PS50989">
    <property type="entry name" value="COA_CT_CTER"/>
    <property type="match status" value="1"/>
</dbReference>
<protein>
    <recommendedName>
        <fullName evidence="1">Acetyl-coenzyme A carboxylase carboxyl transferase subunit alpha</fullName>
        <shortName evidence="1">ACCase subunit alpha</shortName>
        <shortName evidence="1">Acetyl-CoA carboxylase carboxyltransferase subunit alpha</shortName>
        <ecNumber evidence="1">2.1.3.15</ecNumber>
    </recommendedName>
</protein>
<evidence type="ECO:0000255" key="1">
    <source>
        <dbReference type="HAMAP-Rule" id="MF_00823"/>
    </source>
</evidence>
<evidence type="ECO:0000255" key="2">
    <source>
        <dbReference type="PROSITE-ProRule" id="PRU01137"/>
    </source>
</evidence>
<name>ACCA_STAA1</name>
<keyword id="KW-0067">ATP-binding</keyword>
<keyword id="KW-0963">Cytoplasm</keyword>
<keyword id="KW-0275">Fatty acid biosynthesis</keyword>
<keyword id="KW-0276">Fatty acid metabolism</keyword>
<keyword id="KW-0444">Lipid biosynthesis</keyword>
<keyword id="KW-0443">Lipid metabolism</keyword>
<keyword id="KW-0547">Nucleotide-binding</keyword>
<keyword id="KW-0808">Transferase</keyword>
<reference key="1">
    <citation type="journal article" date="2008" name="Antimicrob. Agents Chemother.">
        <title>Mutated response regulator graR is responsible for phenotypic conversion of Staphylococcus aureus from heterogeneous vancomycin-intermediate resistance to vancomycin-intermediate resistance.</title>
        <authorList>
            <person name="Neoh H.-M."/>
            <person name="Cui L."/>
            <person name="Yuzawa H."/>
            <person name="Takeuchi F."/>
            <person name="Matsuo M."/>
            <person name="Hiramatsu K."/>
        </authorList>
    </citation>
    <scope>NUCLEOTIDE SEQUENCE [LARGE SCALE GENOMIC DNA]</scope>
    <source>
        <strain>Mu3 / ATCC 700698</strain>
    </source>
</reference>
<feature type="chain" id="PRO_1000062677" description="Acetyl-coenzyme A carboxylase carboxyl transferase subunit alpha">
    <location>
        <begin position="1"/>
        <end position="314"/>
    </location>
</feature>
<feature type="domain" description="CoA carboxyltransferase C-terminal" evidence="2">
    <location>
        <begin position="32"/>
        <end position="289"/>
    </location>
</feature>
<organism>
    <name type="scientific">Staphylococcus aureus (strain Mu3 / ATCC 700698)</name>
    <dbReference type="NCBI Taxonomy" id="418127"/>
    <lineage>
        <taxon>Bacteria</taxon>
        <taxon>Bacillati</taxon>
        <taxon>Bacillota</taxon>
        <taxon>Bacilli</taxon>
        <taxon>Bacillales</taxon>
        <taxon>Staphylococcaceae</taxon>
        <taxon>Staphylococcus</taxon>
    </lineage>
</organism>
<gene>
    <name evidence="1" type="primary">accA</name>
    <name type="ordered locus">SAHV_1686</name>
</gene>